<dbReference type="EC" id="4.1.3.17"/>
<dbReference type="EC" id="4.1.1.112"/>
<dbReference type="EMBL" id="CP000304">
    <property type="protein sequence ID" value="ABP79711.1"/>
    <property type="molecule type" value="Genomic_DNA"/>
</dbReference>
<dbReference type="SMR" id="A4VL60"/>
<dbReference type="KEGG" id="psa:PST_2040"/>
<dbReference type="eggNOG" id="COG0684">
    <property type="taxonomic scope" value="Bacteria"/>
</dbReference>
<dbReference type="HOGENOM" id="CLU_072626_4_0_6"/>
<dbReference type="Proteomes" id="UP000000233">
    <property type="component" value="Chromosome"/>
</dbReference>
<dbReference type="GO" id="GO:0047443">
    <property type="term" value="F:4-hydroxy-4-methyl-2-oxoglutarate aldolase activity"/>
    <property type="evidence" value="ECO:0007669"/>
    <property type="project" value="UniProtKB-EC"/>
</dbReference>
<dbReference type="GO" id="GO:0046872">
    <property type="term" value="F:metal ion binding"/>
    <property type="evidence" value="ECO:0007669"/>
    <property type="project" value="UniProtKB-KW"/>
</dbReference>
<dbReference type="GO" id="GO:0008948">
    <property type="term" value="F:oxaloacetate decarboxylase activity"/>
    <property type="evidence" value="ECO:0007669"/>
    <property type="project" value="UniProtKB-EC"/>
</dbReference>
<dbReference type="GO" id="GO:0008428">
    <property type="term" value="F:ribonuclease inhibitor activity"/>
    <property type="evidence" value="ECO:0007669"/>
    <property type="project" value="InterPro"/>
</dbReference>
<dbReference type="GO" id="GO:0051252">
    <property type="term" value="P:regulation of RNA metabolic process"/>
    <property type="evidence" value="ECO:0007669"/>
    <property type="project" value="InterPro"/>
</dbReference>
<dbReference type="CDD" id="cd16841">
    <property type="entry name" value="RraA_family"/>
    <property type="match status" value="1"/>
</dbReference>
<dbReference type="Gene3D" id="3.50.30.40">
    <property type="entry name" value="Ribonuclease E inhibitor RraA/RraA-like"/>
    <property type="match status" value="1"/>
</dbReference>
<dbReference type="InterPro" id="IPR010203">
    <property type="entry name" value="RraA"/>
</dbReference>
<dbReference type="InterPro" id="IPR005493">
    <property type="entry name" value="RraA/RraA-like"/>
</dbReference>
<dbReference type="InterPro" id="IPR036704">
    <property type="entry name" value="RraA/RraA-like_sf"/>
</dbReference>
<dbReference type="NCBIfam" id="TIGR01935">
    <property type="entry name" value="NOT-MenG"/>
    <property type="match status" value="1"/>
</dbReference>
<dbReference type="NCBIfam" id="NF006875">
    <property type="entry name" value="PRK09372.1"/>
    <property type="match status" value="1"/>
</dbReference>
<dbReference type="NCBIfam" id="NF009134">
    <property type="entry name" value="PRK12487.1"/>
    <property type="match status" value="1"/>
</dbReference>
<dbReference type="PANTHER" id="PTHR33254">
    <property type="entry name" value="4-HYDROXY-4-METHYL-2-OXOGLUTARATE ALDOLASE 3-RELATED"/>
    <property type="match status" value="1"/>
</dbReference>
<dbReference type="PANTHER" id="PTHR33254:SF29">
    <property type="entry name" value="REGULATOR OF RIBONUCLEASE ACTIVITY A"/>
    <property type="match status" value="1"/>
</dbReference>
<dbReference type="Pfam" id="PF03737">
    <property type="entry name" value="RraA-like"/>
    <property type="match status" value="1"/>
</dbReference>
<dbReference type="SUPFAM" id="SSF89562">
    <property type="entry name" value="RraA-like"/>
    <property type="match status" value="1"/>
</dbReference>
<protein>
    <recommendedName>
        <fullName>Putative 4-hydroxy-4-methyl-2-oxoglutarate aldolase</fullName>
        <shortName>HMG aldolase</shortName>
        <ecNumber>4.1.3.17</ecNumber>
    </recommendedName>
    <alternativeName>
        <fullName>Oxaloacetate decarboxylase</fullName>
        <shortName>OAA decarboxylase</shortName>
        <ecNumber>4.1.1.112</ecNumber>
    </alternativeName>
    <alternativeName>
        <fullName>Regulator of ribonuclease activity homolog</fullName>
    </alternativeName>
    <alternativeName>
        <fullName>RraA-like protein</fullName>
    </alternativeName>
</protein>
<reference key="1">
    <citation type="journal article" date="2008" name="Proc. Natl. Acad. Sci. U.S.A.">
        <title>Nitrogen fixation island and rhizosphere competence traits in the genome of root-associated Pseudomonas stutzeri A1501.</title>
        <authorList>
            <person name="Yan Y."/>
            <person name="Yang J."/>
            <person name="Dou Y."/>
            <person name="Chen M."/>
            <person name="Ping S."/>
            <person name="Peng J."/>
            <person name="Lu W."/>
            <person name="Zhang W."/>
            <person name="Yao Z."/>
            <person name="Li H."/>
            <person name="Liu W."/>
            <person name="He S."/>
            <person name="Geng L."/>
            <person name="Zhang X."/>
            <person name="Yang F."/>
            <person name="Yu H."/>
            <person name="Zhan Y."/>
            <person name="Li D."/>
            <person name="Lin Z."/>
            <person name="Wang Y."/>
            <person name="Elmerich C."/>
            <person name="Lin M."/>
            <person name="Jin Q."/>
        </authorList>
    </citation>
    <scope>NUCLEOTIDE SEQUENCE [LARGE SCALE GENOMIC DNA]</scope>
    <source>
        <strain>A1501</strain>
    </source>
</reference>
<keyword id="KW-0456">Lyase</keyword>
<keyword id="KW-0479">Metal-binding</keyword>
<keyword id="KW-1185">Reference proteome</keyword>
<sequence>MQYVTPDLCDAYPDLVQVVEPLFSNFGGRDSFGGEIVTIKCFEDNSLVKDQVDVDGTGKVMVVDGGGSLRRALLGDMLAEKAARNGWEGLIIYGCVRDVDVLAQTELGVQALASHPMKTDKRGIGDLNVPVTFCGVTFRPGEYVYADNNGIIVSPEPLSMPQ</sequence>
<name>RRAAH_STUS1</name>
<feature type="chain" id="PRO_1000013865" description="Putative 4-hydroxy-4-methyl-2-oxoglutarate aldolase">
    <location>
        <begin position="1"/>
        <end position="162"/>
    </location>
</feature>
<feature type="binding site" evidence="1">
    <location>
        <begin position="75"/>
        <end position="78"/>
    </location>
    <ligand>
        <name>substrate</name>
    </ligand>
</feature>
<feature type="binding site" evidence="1">
    <location>
        <position position="97"/>
    </location>
    <ligand>
        <name>substrate</name>
    </ligand>
</feature>
<feature type="binding site" evidence="1">
    <location>
        <position position="98"/>
    </location>
    <ligand>
        <name>a divalent metal cation</name>
        <dbReference type="ChEBI" id="CHEBI:60240"/>
    </ligand>
</feature>
<accession>A4VL60</accession>
<evidence type="ECO:0000250" key="1"/>
<evidence type="ECO:0000305" key="2"/>
<gene>
    <name type="ordered locus">PST_2040</name>
</gene>
<proteinExistence type="inferred from homology"/>
<comment type="function">
    <text evidence="1">Catalyzes the aldol cleavage of 4-hydroxy-4-methyl-2-oxoglutarate (HMG) into 2 molecules of pyruvate. Also contains a secondary oxaloacetate (OAA) decarboxylase activity due to the common pyruvate enolate transition state formed following C-C bond cleavage in the retro-aldol and decarboxylation reactions (By similarity).</text>
</comment>
<comment type="catalytic activity">
    <reaction>
        <text>4-hydroxy-4-methyl-2-oxoglutarate = 2 pyruvate</text>
        <dbReference type="Rhea" id="RHEA:22748"/>
        <dbReference type="ChEBI" id="CHEBI:15361"/>
        <dbReference type="ChEBI" id="CHEBI:58276"/>
        <dbReference type="EC" id="4.1.3.17"/>
    </reaction>
</comment>
<comment type="catalytic activity">
    <reaction>
        <text>oxaloacetate + H(+) = pyruvate + CO2</text>
        <dbReference type="Rhea" id="RHEA:15641"/>
        <dbReference type="ChEBI" id="CHEBI:15361"/>
        <dbReference type="ChEBI" id="CHEBI:15378"/>
        <dbReference type="ChEBI" id="CHEBI:16452"/>
        <dbReference type="ChEBI" id="CHEBI:16526"/>
        <dbReference type="EC" id="4.1.1.112"/>
    </reaction>
</comment>
<comment type="cofactor">
    <cofactor evidence="1">
        <name>a divalent metal cation</name>
        <dbReference type="ChEBI" id="CHEBI:60240"/>
    </cofactor>
    <text evidence="1">Divalent metal cation.</text>
</comment>
<comment type="subunit">
    <text evidence="1">Homotrimer.</text>
</comment>
<comment type="similarity">
    <text evidence="2">Belongs to the class II aldolase/RraA-like family.</text>
</comment>
<organism>
    <name type="scientific">Stutzerimonas stutzeri (strain A1501)</name>
    <name type="common">Pseudomonas stutzeri</name>
    <dbReference type="NCBI Taxonomy" id="379731"/>
    <lineage>
        <taxon>Bacteria</taxon>
        <taxon>Pseudomonadati</taxon>
        <taxon>Pseudomonadota</taxon>
        <taxon>Gammaproteobacteria</taxon>
        <taxon>Pseudomonadales</taxon>
        <taxon>Pseudomonadaceae</taxon>
        <taxon>Stutzerimonas</taxon>
    </lineage>
</organism>